<organism>
    <name type="scientific">Schizosaccharomyces pombe (strain 972 / ATCC 24843)</name>
    <name type="common">Fission yeast</name>
    <dbReference type="NCBI Taxonomy" id="284812"/>
    <lineage>
        <taxon>Eukaryota</taxon>
        <taxon>Fungi</taxon>
        <taxon>Dikarya</taxon>
        <taxon>Ascomycota</taxon>
        <taxon>Taphrinomycotina</taxon>
        <taxon>Schizosaccharomycetes</taxon>
        <taxon>Schizosaccharomycetales</taxon>
        <taxon>Schizosaccharomycetaceae</taxon>
        <taxon>Schizosaccharomyces</taxon>
    </lineage>
</organism>
<feature type="chain" id="PRO_0000090702" description="Uncharacterized mitochondrial carrier C12B10.09">
    <location>
        <begin position="1"/>
        <end position="345"/>
    </location>
</feature>
<feature type="transmembrane region" description="Helical; Name=1" evidence="1">
    <location>
        <begin position="83"/>
        <end position="103"/>
    </location>
</feature>
<feature type="transmembrane region" description="Helical; Name=2" evidence="1">
    <location>
        <begin position="128"/>
        <end position="148"/>
    </location>
</feature>
<feature type="transmembrane region" description="Helical; Name=3" evidence="1">
    <location>
        <begin position="220"/>
        <end position="240"/>
    </location>
</feature>
<feature type="transmembrane region" description="Helical; Name=4" evidence="1">
    <location>
        <begin position="262"/>
        <end position="282"/>
    </location>
</feature>
<feature type="transmembrane region" description="Helical; Name=5" evidence="1">
    <location>
        <begin position="296"/>
        <end position="316"/>
    </location>
</feature>
<feature type="transmembrane region" description="Helical; Name=6" evidence="1">
    <location>
        <begin position="319"/>
        <end position="339"/>
    </location>
</feature>
<feature type="repeat" description="Solcar 1">
    <location>
        <begin position="80"/>
        <end position="153"/>
    </location>
</feature>
<feature type="repeat" description="Solcar 2">
    <location>
        <begin position="162"/>
        <end position="246"/>
    </location>
</feature>
<feature type="repeat" description="Solcar 3">
    <location>
        <begin position="256"/>
        <end position="339"/>
    </location>
</feature>
<sequence>MIFNYVFSNSFSFLYLMVNVQCRIKEIMYWNICLYWDVFSKLIIYNKVCQFGRIHIFHGKNRHQLLRTCHFTPSKRHSAMSFFEALGAGICAGLAVDLSLFPIDTLKTRLQAKGGFVKNGGFHGVYRGLGSILVGSAPGASLFFTTYENMKSRLSQSGLGLSDPQIHMCSASLGEIAACIVRVPTEVIKQRAQASGGTLSSRNILQTILKSNNVWRDFYAGYGITIAREIPFTLIQFPIWEHLKLKWRIKHSRNKNLAHEAAISGSIAGGIAAALTTPFDVVKTRIMTSQQRLSYVFTIKSIVAHEGFLALYKGIVPRVLWLSGGGAIFLGCYDVILNFMKAEGL</sequence>
<dbReference type="EMBL" id="CU329670">
    <property type="protein sequence ID" value="CAA94699.1"/>
    <property type="molecule type" value="Genomic_DNA"/>
</dbReference>
<dbReference type="PIR" id="T37576">
    <property type="entry name" value="T37576"/>
</dbReference>
<dbReference type="RefSeq" id="NP_594641.1">
    <property type="nucleotide sequence ID" value="NM_001020069.2"/>
</dbReference>
<dbReference type="SMR" id="Q10442"/>
<dbReference type="BioGRID" id="279148">
    <property type="interactions" value="13"/>
</dbReference>
<dbReference type="FunCoup" id="Q10442">
    <property type="interactions" value="308"/>
</dbReference>
<dbReference type="STRING" id="284812.Q10442"/>
<dbReference type="PaxDb" id="4896-SPAC12B10.09.1"/>
<dbReference type="EnsemblFungi" id="SPAC12B10.09.1">
    <property type="protein sequence ID" value="SPAC12B10.09.1:pep"/>
    <property type="gene ID" value="SPAC12B10.09"/>
</dbReference>
<dbReference type="KEGG" id="spo:2542695"/>
<dbReference type="PomBase" id="SPAC12B10.09"/>
<dbReference type="VEuPathDB" id="FungiDB:SPAC12B10.09"/>
<dbReference type="eggNOG" id="KOG0768">
    <property type="taxonomic scope" value="Eukaryota"/>
</dbReference>
<dbReference type="HOGENOM" id="CLU_015166_3_0_1"/>
<dbReference type="InParanoid" id="Q10442"/>
<dbReference type="OMA" id="IGPRTMW"/>
<dbReference type="PhylomeDB" id="Q10442"/>
<dbReference type="Reactome" id="R-SPO-425393">
    <property type="pathway name" value="Transport of inorganic cations/anions and amino acids/oligopeptides"/>
</dbReference>
<dbReference type="PRO" id="PR:Q10442"/>
<dbReference type="Proteomes" id="UP000002485">
    <property type="component" value="Chromosome I"/>
</dbReference>
<dbReference type="GO" id="GO:0005743">
    <property type="term" value="C:mitochondrial inner membrane"/>
    <property type="evidence" value="ECO:0000318"/>
    <property type="project" value="GO_Central"/>
</dbReference>
<dbReference type="GO" id="GO:0000095">
    <property type="term" value="F:S-adenosyl-L-methionine transmembrane transporter activity"/>
    <property type="evidence" value="ECO:0000318"/>
    <property type="project" value="GO_Central"/>
</dbReference>
<dbReference type="GO" id="GO:1990543">
    <property type="term" value="P:mitochondrial S-adenosyl-L-methionine transmembrane transport"/>
    <property type="evidence" value="ECO:0000250"/>
    <property type="project" value="PomBase"/>
</dbReference>
<dbReference type="FunFam" id="1.50.40.10:FF:000018">
    <property type="entry name" value="S-adenosylmethionine mitochondrial carrier protein-like"/>
    <property type="match status" value="1"/>
</dbReference>
<dbReference type="Gene3D" id="1.50.40.10">
    <property type="entry name" value="Mitochondrial carrier domain"/>
    <property type="match status" value="1"/>
</dbReference>
<dbReference type="InterPro" id="IPR018108">
    <property type="entry name" value="Mitochondrial_sb/sol_carrier"/>
</dbReference>
<dbReference type="InterPro" id="IPR023395">
    <property type="entry name" value="Mt_carrier_dom_sf"/>
</dbReference>
<dbReference type="PANTHER" id="PTHR45667">
    <property type="entry name" value="S-ADENOSYLMETHIONINE MITOCHONDRIAL CARRIER PROTEIN"/>
    <property type="match status" value="1"/>
</dbReference>
<dbReference type="Pfam" id="PF00153">
    <property type="entry name" value="Mito_carr"/>
    <property type="match status" value="3"/>
</dbReference>
<dbReference type="SUPFAM" id="SSF103506">
    <property type="entry name" value="Mitochondrial carrier"/>
    <property type="match status" value="1"/>
</dbReference>
<dbReference type="PROSITE" id="PS50920">
    <property type="entry name" value="SOLCAR"/>
    <property type="match status" value="3"/>
</dbReference>
<name>YDE9_SCHPO</name>
<keyword id="KW-0472">Membrane</keyword>
<keyword id="KW-0496">Mitochondrion</keyword>
<keyword id="KW-0999">Mitochondrion inner membrane</keyword>
<keyword id="KW-1185">Reference proteome</keyword>
<keyword id="KW-0677">Repeat</keyword>
<keyword id="KW-0812">Transmembrane</keyword>
<keyword id="KW-1133">Transmembrane helix</keyword>
<keyword id="KW-0813">Transport</keyword>
<comment type="subcellular location">
    <subcellularLocation>
        <location evidence="2">Mitochondrion inner membrane</location>
        <topology evidence="2">Multi-pass membrane protein</topology>
    </subcellularLocation>
</comment>
<comment type="similarity">
    <text evidence="2">Belongs to the mitochondrial carrier (TC 2.A.29) family.</text>
</comment>
<reference key="1">
    <citation type="journal article" date="2002" name="Nature">
        <title>The genome sequence of Schizosaccharomyces pombe.</title>
        <authorList>
            <person name="Wood V."/>
            <person name="Gwilliam R."/>
            <person name="Rajandream M.A."/>
            <person name="Lyne M.H."/>
            <person name="Lyne R."/>
            <person name="Stewart A."/>
            <person name="Sgouros J.G."/>
            <person name="Peat N."/>
            <person name="Hayles J."/>
            <person name="Baker S.G."/>
            <person name="Basham D."/>
            <person name="Bowman S."/>
            <person name="Brooks K."/>
            <person name="Brown D."/>
            <person name="Brown S."/>
            <person name="Chillingworth T."/>
            <person name="Churcher C.M."/>
            <person name="Collins M."/>
            <person name="Connor R."/>
            <person name="Cronin A."/>
            <person name="Davis P."/>
            <person name="Feltwell T."/>
            <person name="Fraser A."/>
            <person name="Gentles S."/>
            <person name="Goble A."/>
            <person name="Hamlin N."/>
            <person name="Harris D.E."/>
            <person name="Hidalgo J."/>
            <person name="Hodgson G."/>
            <person name="Holroyd S."/>
            <person name="Hornsby T."/>
            <person name="Howarth S."/>
            <person name="Huckle E.J."/>
            <person name="Hunt S."/>
            <person name="Jagels K."/>
            <person name="James K.D."/>
            <person name="Jones L."/>
            <person name="Jones M."/>
            <person name="Leather S."/>
            <person name="McDonald S."/>
            <person name="McLean J."/>
            <person name="Mooney P."/>
            <person name="Moule S."/>
            <person name="Mungall K.L."/>
            <person name="Murphy L.D."/>
            <person name="Niblett D."/>
            <person name="Odell C."/>
            <person name="Oliver K."/>
            <person name="O'Neil S."/>
            <person name="Pearson D."/>
            <person name="Quail M.A."/>
            <person name="Rabbinowitsch E."/>
            <person name="Rutherford K.M."/>
            <person name="Rutter S."/>
            <person name="Saunders D."/>
            <person name="Seeger K."/>
            <person name="Sharp S."/>
            <person name="Skelton J."/>
            <person name="Simmonds M.N."/>
            <person name="Squares R."/>
            <person name="Squares S."/>
            <person name="Stevens K."/>
            <person name="Taylor K."/>
            <person name="Taylor R.G."/>
            <person name="Tivey A."/>
            <person name="Walsh S.V."/>
            <person name="Warren T."/>
            <person name="Whitehead S."/>
            <person name="Woodward J.R."/>
            <person name="Volckaert G."/>
            <person name="Aert R."/>
            <person name="Robben J."/>
            <person name="Grymonprez B."/>
            <person name="Weltjens I."/>
            <person name="Vanstreels E."/>
            <person name="Rieger M."/>
            <person name="Schaefer M."/>
            <person name="Mueller-Auer S."/>
            <person name="Gabel C."/>
            <person name="Fuchs M."/>
            <person name="Duesterhoeft A."/>
            <person name="Fritzc C."/>
            <person name="Holzer E."/>
            <person name="Moestl D."/>
            <person name="Hilbert H."/>
            <person name="Borzym K."/>
            <person name="Langer I."/>
            <person name="Beck A."/>
            <person name="Lehrach H."/>
            <person name="Reinhardt R."/>
            <person name="Pohl T.M."/>
            <person name="Eger P."/>
            <person name="Zimmermann W."/>
            <person name="Wedler H."/>
            <person name="Wambutt R."/>
            <person name="Purnelle B."/>
            <person name="Goffeau A."/>
            <person name="Cadieu E."/>
            <person name="Dreano S."/>
            <person name="Gloux S."/>
            <person name="Lelaure V."/>
            <person name="Mottier S."/>
            <person name="Galibert F."/>
            <person name="Aves S.J."/>
            <person name="Xiang Z."/>
            <person name="Hunt C."/>
            <person name="Moore K."/>
            <person name="Hurst S.M."/>
            <person name="Lucas M."/>
            <person name="Rochet M."/>
            <person name="Gaillardin C."/>
            <person name="Tallada V.A."/>
            <person name="Garzon A."/>
            <person name="Thode G."/>
            <person name="Daga R.R."/>
            <person name="Cruzado L."/>
            <person name="Jimenez J."/>
            <person name="Sanchez M."/>
            <person name="del Rey F."/>
            <person name="Benito J."/>
            <person name="Dominguez A."/>
            <person name="Revuelta J.L."/>
            <person name="Moreno S."/>
            <person name="Armstrong J."/>
            <person name="Forsburg S.L."/>
            <person name="Cerutti L."/>
            <person name="Lowe T."/>
            <person name="McCombie W.R."/>
            <person name="Paulsen I."/>
            <person name="Potashkin J."/>
            <person name="Shpakovski G.V."/>
            <person name="Ussery D."/>
            <person name="Barrell B.G."/>
            <person name="Nurse P."/>
        </authorList>
    </citation>
    <scope>NUCLEOTIDE SEQUENCE [LARGE SCALE GENOMIC DNA]</scope>
    <source>
        <strain>972 / ATCC 24843</strain>
    </source>
</reference>
<evidence type="ECO:0000255" key="1"/>
<evidence type="ECO:0000305" key="2"/>
<gene>
    <name type="ORF">SPAC12B10.09</name>
</gene>
<proteinExistence type="inferred from homology"/>
<protein>
    <recommendedName>
        <fullName>Uncharacterized mitochondrial carrier C12B10.09</fullName>
    </recommendedName>
</protein>
<accession>Q10442</accession>